<organism>
    <name type="scientific">Neisseria meningitidis serogroup A / serotype 4A (strain DSM 15465 / Z2491)</name>
    <dbReference type="NCBI Taxonomy" id="122587"/>
    <lineage>
        <taxon>Bacteria</taxon>
        <taxon>Pseudomonadati</taxon>
        <taxon>Pseudomonadota</taxon>
        <taxon>Betaproteobacteria</taxon>
        <taxon>Neisseriales</taxon>
        <taxon>Neisseriaceae</taxon>
        <taxon>Neisseria</taxon>
    </lineage>
</organism>
<name>RPOA_NEIMA</name>
<keyword id="KW-0240">DNA-directed RNA polymerase</keyword>
<keyword id="KW-0548">Nucleotidyltransferase</keyword>
<keyword id="KW-0804">Transcription</keyword>
<keyword id="KW-0808">Transferase</keyword>
<gene>
    <name evidence="1" type="primary">rpoA</name>
    <name type="ordered locus">NMA0103</name>
</gene>
<dbReference type="EC" id="2.7.7.6" evidence="1"/>
<dbReference type="EMBL" id="AL157959">
    <property type="protein sequence ID" value="CAM07421.1"/>
    <property type="molecule type" value="Genomic_DNA"/>
</dbReference>
<dbReference type="RefSeq" id="WP_002215457.1">
    <property type="nucleotide sequence ID" value="NC_003116.1"/>
</dbReference>
<dbReference type="SMR" id="P66703"/>
<dbReference type="EnsemblBacteria" id="CAM07421">
    <property type="protein sequence ID" value="CAM07421"/>
    <property type="gene ID" value="NMA0103"/>
</dbReference>
<dbReference type="GeneID" id="93387243"/>
<dbReference type="KEGG" id="nma:NMA0103"/>
<dbReference type="HOGENOM" id="CLU_053084_0_0_4"/>
<dbReference type="Proteomes" id="UP000000626">
    <property type="component" value="Chromosome"/>
</dbReference>
<dbReference type="GO" id="GO:0005737">
    <property type="term" value="C:cytoplasm"/>
    <property type="evidence" value="ECO:0007669"/>
    <property type="project" value="UniProtKB-ARBA"/>
</dbReference>
<dbReference type="GO" id="GO:0000428">
    <property type="term" value="C:DNA-directed RNA polymerase complex"/>
    <property type="evidence" value="ECO:0007669"/>
    <property type="project" value="UniProtKB-KW"/>
</dbReference>
<dbReference type="GO" id="GO:0003677">
    <property type="term" value="F:DNA binding"/>
    <property type="evidence" value="ECO:0007669"/>
    <property type="project" value="UniProtKB-UniRule"/>
</dbReference>
<dbReference type="GO" id="GO:0003899">
    <property type="term" value="F:DNA-directed RNA polymerase activity"/>
    <property type="evidence" value="ECO:0007669"/>
    <property type="project" value="UniProtKB-UniRule"/>
</dbReference>
<dbReference type="GO" id="GO:0046983">
    <property type="term" value="F:protein dimerization activity"/>
    <property type="evidence" value="ECO:0007669"/>
    <property type="project" value="InterPro"/>
</dbReference>
<dbReference type="GO" id="GO:0006351">
    <property type="term" value="P:DNA-templated transcription"/>
    <property type="evidence" value="ECO:0007669"/>
    <property type="project" value="UniProtKB-UniRule"/>
</dbReference>
<dbReference type="CDD" id="cd06928">
    <property type="entry name" value="RNAP_alpha_NTD"/>
    <property type="match status" value="1"/>
</dbReference>
<dbReference type="FunFam" id="1.10.150.20:FF:000001">
    <property type="entry name" value="DNA-directed RNA polymerase subunit alpha"/>
    <property type="match status" value="1"/>
</dbReference>
<dbReference type="FunFam" id="2.170.120.12:FF:000001">
    <property type="entry name" value="DNA-directed RNA polymerase subunit alpha"/>
    <property type="match status" value="1"/>
</dbReference>
<dbReference type="Gene3D" id="1.10.150.20">
    <property type="entry name" value="5' to 3' exonuclease, C-terminal subdomain"/>
    <property type="match status" value="1"/>
</dbReference>
<dbReference type="Gene3D" id="2.170.120.12">
    <property type="entry name" value="DNA-directed RNA polymerase, insert domain"/>
    <property type="match status" value="1"/>
</dbReference>
<dbReference type="Gene3D" id="3.30.1360.10">
    <property type="entry name" value="RNA polymerase, RBP11-like subunit"/>
    <property type="match status" value="1"/>
</dbReference>
<dbReference type="HAMAP" id="MF_00059">
    <property type="entry name" value="RNApol_bact_RpoA"/>
    <property type="match status" value="1"/>
</dbReference>
<dbReference type="InterPro" id="IPR011262">
    <property type="entry name" value="DNA-dir_RNA_pol_insert"/>
</dbReference>
<dbReference type="InterPro" id="IPR011263">
    <property type="entry name" value="DNA-dir_RNA_pol_RpoA/D/Rpb3"/>
</dbReference>
<dbReference type="InterPro" id="IPR011773">
    <property type="entry name" value="DNA-dir_RpoA"/>
</dbReference>
<dbReference type="InterPro" id="IPR036603">
    <property type="entry name" value="RBP11-like"/>
</dbReference>
<dbReference type="InterPro" id="IPR011260">
    <property type="entry name" value="RNAP_asu_C"/>
</dbReference>
<dbReference type="InterPro" id="IPR036643">
    <property type="entry name" value="RNApol_insert_sf"/>
</dbReference>
<dbReference type="NCBIfam" id="NF003513">
    <property type="entry name" value="PRK05182.1-2"/>
    <property type="match status" value="1"/>
</dbReference>
<dbReference type="NCBIfam" id="NF003519">
    <property type="entry name" value="PRK05182.2-5"/>
    <property type="match status" value="1"/>
</dbReference>
<dbReference type="NCBIfam" id="TIGR02027">
    <property type="entry name" value="rpoA"/>
    <property type="match status" value="1"/>
</dbReference>
<dbReference type="Pfam" id="PF01000">
    <property type="entry name" value="RNA_pol_A_bac"/>
    <property type="match status" value="1"/>
</dbReference>
<dbReference type="Pfam" id="PF03118">
    <property type="entry name" value="RNA_pol_A_CTD"/>
    <property type="match status" value="1"/>
</dbReference>
<dbReference type="Pfam" id="PF01193">
    <property type="entry name" value="RNA_pol_L"/>
    <property type="match status" value="1"/>
</dbReference>
<dbReference type="SMART" id="SM00662">
    <property type="entry name" value="RPOLD"/>
    <property type="match status" value="1"/>
</dbReference>
<dbReference type="SUPFAM" id="SSF47789">
    <property type="entry name" value="C-terminal domain of RNA polymerase alpha subunit"/>
    <property type="match status" value="1"/>
</dbReference>
<dbReference type="SUPFAM" id="SSF56553">
    <property type="entry name" value="Insert subdomain of RNA polymerase alpha subunit"/>
    <property type="match status" value="1"/>
</dbReference>
<dbReference type="SUPFAM" id="SSF55257">
    <property type="entry name" value="RBP11-like subunits of RNA polymerase"/>
    <property type="match status" value="1"/>
</dbReference>
<sequence>MQNSTTEFLKPRQIDVNTFSATRAKVSMQPFERGFGHTLGNALRRILLSSMNGFAPTEVAIAGVLHEYSTVDGIQEDVVDILLNIKGIVFKLHGRSQVQLVLKKSGSGVVSAGDIELPHDVEILNPGHVICHLADNGQIEMEIKVEQGRGYQSVSGRQVVRDENRQIGAIQLDASFSPISRVSFEVEPARVEQRTDLDKLVLDIETDGSIDPEEAVRSAARILIDQMSIFADLQGTPVEEVEEKAPPIDPVLLRPVDDLELTVRSANCLKAEDIYYIGDLIQRTETELLKTPNLGRKSLNEIKEVLASKGLTLGSKLEAWPPVGLEKP</sequence>
<reference key="1">
    <citation type="journal article" date="2000" name="Nature">
        <title>Complete DNA sequence of a serogroup A strain of Neisseria meningitidis Z2491.</title>
        <authorList>
            <person name="Parkhill J."/>
            <person name="Achtman M."/>
            <person name="James K.D."/>
            <person name="Bentley S.D."/>
            <person name="Churcher C.M."/>
            <person name="Klee S.R."/>
            <person name="Morelli G."/>
            <person name="Basham D."/>
            <person name="Brown D."/>
            <person name="Chillingworth T."/>
            <person name="Davies R.M."/>
            <person name="Davis P."/>
            <person name="Devlin K."/>
            <person name="Feltwell T."/>
            <person name="Hamlin N."/>
            <person name="Holroyd S."/>
            <person name="Jagels K."/>
            <person name="Leather S."/>
            <person name="Moule S."/>
            <person name="Mungall K.L."/>
            <person name="Quail M.A."/>
            <person name="Rajandream M.A."/>
            <person name="Rutherford K.M."/>
            <person name="Simmonds M."/>
            <person name="Skelton J."/>
            <person name="Whitehead S."/>
            <person name="Spratt B.G."/>
            <person name="Barrell B.G."/>
        </authorList>
    </citation>
    <scope>NUCLEOTIDE SEQUENCE [LARGE SCALE GENOMIC DNA]</scope>
    <source>
        <strain>DSM 15465 / Z2491</strain>
    </source>
</reference>
<protein>
    <recommendedName>
        <fullName evidence="1">DNA-directed RNA polymerase subunit alpha</fullName>
        <shortName evidence="1">RNAP subunit alpha</shortName>
        <ecNumber evidence="1">2.7.7.6</ecNumber>
    </recommendedName>
    <alternativeName>
        <fullName evidence="1">RNA polymerase subunit alpha</fullName>
    </alternativeName>
    <alternativeName>
        <fullName evidence="1">Transcriptase subunit alpha</fullName>
    </alternativeName>
</protein>
<comment type="function">
    <text evidence="1">DNA-dependent RNA polymerase catalyzes the transcription of DNA into RNA using the four ribonucleoside triphosphates as substrates.</text>
</comment>
<comment type="catalytic activity">
    <reaction evidence="1">
        <text>RNA(n) + a ribonucleoside 5'-triphosphate = RNA(n+1) + diphosphate</text>
        <dbReference type="Rhea" id="RHEA:21248"/>
        <dbReference type="Rhea" id="RHEA-COMP:14527"/>
        <dbReference type="Rhea" id="RHEA-COMP:17342"/>
        <dbReference type="ChEBI" id="CHEBI:33019"/>
        <dbReference type="ChEBI" id="CHEBI:61557"/>
        <dbReference type="ChEBI" id="CHEBI:140395"/>
        <dbReference type="EC" id="2.7.7.6"/>
    </reaction>
</comment>
<comment type="subunit">
    <text evidence="1">Homodimer. The RNAP catalytic core consists of 2 alpha, 1 beta, 1 beta' and 1 omega subunit. When a sigma factor is associated with the core the holoenzyme is formed, which can initiate transcription.</text>
</comment>
<comment type="domain">
    <text evidence="1">The N-terminal domain is essential for RNAP assembly and basal transcription, whereas the C-terminal domain is involved in interaction with transcriptional regulators and with upstream promoter elements.</text>
</comment>
<comment type="similarity">
    <text evidence="1">Belongs to the RNA polymerase alpha chain family.</text>
</comment>
<proteinExistence type="inferred from homology"/>
<accession>P66703</accession>
<accession>A1INW4</accession>
<accession>Q9JR06</accession>
<evidence type="ECO:0000255" key="1">
    <source>
        <dbReference type="HAMAP-Rule" id="MF_00059"/>
    </source>
</evidence>
<feature type="chain" id="PRO_0000175346" description="DNA-directed RNA polymerase subunit alpha">
    <location>
        <begin position="1"/>
        <end position="328"/>
    </location>
</feature>
<feature type="region of interest" description="Alpha N-terminal domain (alpha-NTD)" evidence="1">
    <location>
        <begin position="1"/>
        <end position="234"/>
    </location>
</feature>
<feature type="region of interest" description="Alpha C-terminal domain (alpha-CTD)" evidence="1">
    <location>
        <begin position="248"/>
        <end position="328"/>
    </location>
</feature>